<sequence>MNGDIAVFAGNSNKQIAEEICTHLGIQSGKINLKKFSDGEISVKIEDNVRGKEVFIVQSTSAPANDHLMELILIMDALRRASVSSISVVIPYYGYGRQDRKVEPRVPISARVVADLIEVVGLDRILTMDLHADQIQGFFRVPVDNLHFAPVLAEYVNTKKIDDLVIVSPDSGGAERARAFGKKVNGSLAIIDKRRPKANVSEVMNVIGEIEGKNCILLDDMIDTAGTICKAADVLLKHGAKSVYCAATHGVLSGEAVDRINSTQFSEVVLANTIAIPESKKINKLKSLSVAPLFANAIQRIHTNQSVSTLFD</sequence>
<proteinExistence type="inferred from homology"/>
<dbReference type="EC" id="2.7.6.1" evidence="1"/>
<dbReference type="EMBL" id="AE016823">
    <property type="protein sequence ID" value="AAS69051.1"/>
    <property type="molecule type" value="Genomic_DNA"/>
</dbReference>
<dbReference type="RefSeq" id="WP_001012709.1">
    <property type="nucleotide sequence ID" value="NC_005823.1"/>
</dbReference>
<dbReference type="SMR" id="Q72V73"/>
<dbReference type="KEGG" id="lic:LIC_10429"/>
<dbReference type="HOGENOM" id="CLU_033546_2_0_12"/>
<dbReference type="UniPathway" id="UPA00087">
    <property type="reaction ID" value="UER00172"/>
</dbReference>
<dbReference type="Proteomes" id="UP000007037">
    <property type="component" value="Chromosome I"/>
</dbReference>
<dbReference type="GO" id="GO:0005737">
    <property type="term" value="C:cytoplasm"/>
    <property type="evidence" value="ECO:0007669"/>
    <property type="project" value="UniProtKB-SubCell"/>
</dbReference>
<dbReference type="GO" id="GO:0002189">
    <property type="term" value="C:ribose phosphate diphosphokinase complex"/>
    <property type="evidence" value="ECO:0007669"/>
    <property type="project" value="TreeGrafter"/>
</dbReference>
<dbReference type="GO" id="GO:0005524">
    <property type="term" value="F:ATP binding"/>
    <property type="evidence" value="ECO:0007669"/>
    <property type="project" value="UniProtKB-KW"/>
</dbReference>
<dbReference type="GO" id="GO:0016301">
    <property type="term" value="F:kinase activity"/>
    <property type="evidence" value="ECO:0007669"/>
    <property type="project" value="UniProtKB-KW"/>
</dbReference>
<dbReference type="GO" id="GO:0000287">
    <property type="term" value="F:magnesium ion binding"/>
    <property type="evidence" value="ECO:0007669"/>
    <property type="project" value="UniProtKB-UniRule"/>
</dbReference>
<dbReference type="GO" id="GO:0004749">
    <property type="term" value="F:ribose phosphate diphosphokinase activity"/>
    <property type="evidence" value="ECO:0007669"/>
    <property type="project" value="UniProtKB-UniRule"/>
</dbReference>
<dbReference type="GO" id="GO:0006015">
    <property type="term" value="P:5-phosphoribose 1-diphosphate biosynthetic process"/>
    <property type="evidence" value="ECO:0007669"/>
    <property type="project" value="UniProtKB-UniRule"/>
</dbReference>
<dbReference type="GO" id="GO:0006164">
    <property type="term" value="P:purine nucleotide biosynthetic process"/>
    <property type="evidence" value="ECO:0007669"/>
    <property type="project" value="TreeGrafter"/>
</dbReference>
<dbReference type="GO" id="GO:0009156">
    <property type="term" value="P:ribonucleoside monophosphate biosynthetic process"/>
    <property type="evidence" value="ECO:0007669"/>
    <property type="project" value="InterPro"/>
</dbReference>
<dbReference type="CDD" id="cd06223">
    <property type="entry name" value="PRTases_typeI"/>
    <property type="match status" value="1"/>
</dbReference>
<dbReference type="FunFam" id="3.40.50.2020:FF:000001">
    <property type="entry name" value="Ribose-phosphate pyrophosphokinase"/>
    <property type="match status" value="1"/>
</dbReference>
<dbReference type="Gene3D" id="3.40.50.2020">
    <property type="match status" value="2"/>
</dbReference>
<dbReference type="HAMAP" id="MF_00583_B">
    <property type="entry name" value="RibP_PPkinase_B"/>
    <property type="match status" value="1"/>
</dbReference>
<dbReference type="InterPro" id="IPR000842">
    <property type="entry name" value="PRib_PP_synth_CS"/>
</dbReference>
<dbReference type="InterPro" id="IPR029099">
    <property type="entry name" value="Pribosyltran_N"/>
</dbReference>
<dbReference type="InterPro" id="IPR000836">
    <property type="entry name" value="PRibTrfase_dom"/>
</dbReference>
<dbReference type="InterPro" id="IPR029057">
    <property type="entry name" value="PRTase-like"/>
</dbReference>
<dbReference type="InterPro" id="IPR005946">
    <property type="entry name" value="Rib-P_diPkinase"/>
</dbReference>
<dbReference type="InterPro" id="IPR037515">
    <property type="entry name" value="Rib-P_diPkinase_bac"/>
</dbReference>
<dbReference type="NCBIfam" id="NF002320">
    <property type="entry name" value="PRK01259.1"/>
    <property type="match status" value="1"/>
</dbReference>
<dbReference type="NCBIfam" id="TIGR01251">
    <property type="entry name" value="ribP_PPkin"/>
    <property type="match status" value="1"/>
</dbReference>
<dbReference type="PANTHER" id="PTHR10210">
    <property type="entry name" value="RIBOSE-PHOSPHATE DIPHOSPHOKINASE FAMILY MEMBER"/>
    <property type="match status" value="1"/>
</dbReference>
<dbReference type="PANTHER" id="PTHR10210:SF41">
    <property type="entry name" value="RIBOSE-PHOSPHATE PYROPHOSPHOKINASE 1, CHLOROPLASTIC"/>
    <property type="match status" value="1"/>
</dbReference>
<dbReference type="Pfam" id="PF14572">
    <property type="entry name" value="Pribosyl_synth"/>
    <property type="match status" value="1"/>
</dbReference>
<dbReference type="Pfam" id="PF13793">
    <property type="entry name" value="Pribosyltran_N"/>
    <property type="match status" value="1"/>
</dbReference>
<dbReference type="SMART" id="SM01400">
    <property type="entry name" value="Pribosyltran_N"/>
    <property type="match status" value="1"/>
</dbReference>
<dbReference type="SUPFAM" id="SSF53271">
    <property type="entry name" value="PRTase-like"/>
    <property type="match status" value="1"/>
</dbReference>
<dbReference type="PROSITE" id="PS00114">
    <property type="entry name" value="PRPP_SYNTHASE"/>
    <property type="match status" value="1"/>
</dbReference>
<gene>
    <name evidence="1" type="primary">prs</name>
    <name type="ordered locus">LIC_10429</name>
</gene>
<feature type="chain" id="PRO_0000141150" description="Ribose-phosphate pyrophosphokinase">
    <location>
        <begin position="1"/>
        <end position="312"/>
    </location>
</feature>
<feature type="active site" evidence="1">
    <location>
        <position position="193"/>
    </location>
</feature>
<feature type="binding site" evidence="1">
    <location>
        <begin position="38"/>
        <end position="40"/>
    </location>
    <ligand>
        <name>ATP</name>
        <dbReference type="ChEBI" id="CHEBI:30616"/>
    </ligand>
</feature>
<feature type="binding site" evidence="1">
    <location>
        <begin position="97"/>
        <end position="98"/>
    </location>
    <ligand>
        <name>ATP</name>
        <dbReference type="ChEBI" id="CHEBI:30616"/>
    </ligand>
</feature>
<feature type="binding site" evidence="1">
    <location>
        <position position="131"/>
    </location>
    <ligand>
        <name>Mg(2+)</name>
        <dbReference type="ChEBI" id="CHEBI:18420"/>
        <label>1</label>
    </ligand>
</feature>
<feature type="binding site" evidence="1">
    <location>
        <position position="170"/>
    </location>
    <ligand>
        <name>Mg(2+)</name>
        <dbReference type="ChEBI" id="CHEBI:18420"/>
        <label>2</label>
    </ligand>
</feature>
<feature type="binding site" evidence="1">
    <location>
        <position position="195"/>
    </location>
    <ligand>
        <name>D-ribose 5-phosphate</name>
        <dbReference type="ChEBI" id="CHEBI:78346"/>
    </ligand>
</feature>
<feature type="binding site" evidence="1">
    <location>
        <position position="219"/>
    </location>
    <ligand>
        <name>D-ribose 5-phosphate</name>
        <dbReference type="ChEBI" id="CHEBI:78346"/>
    </ligand>
</feature>
<feature type="binding site" evidence="1">
    <location>
        <begin position="223"/>
        <end position="227"/>
    </location>
    <ligand>
        <name>D-ribose 5-phosphate</name>
        <dbReference type="ChEBI" id="CHEBI:78346"/>
    </ligand>
</feature>
<keyword id="KW-0067">ATP-binding</keyword>
<keyword id="KW-0963">Cytoplasm</keyword>
<keyword id="KW-0418">Kinase</keyword>
<keyword id="KW-0460">Magnesium</keyword>
<keyword id="KW-0479">Metal-binding</keyword>
<keyword id="KW-0545">Nucleotide biosynthesis</keyword>
<keyword id="KW-0547">Nucleotide-binding</keyword>
<keyword id="KW-0808">Transferase</keyword>
<reference key="1">
    <citation type="journal article" date="2004" name="J. Bacteriol.">
        <title>Comparative genomics of two Leptospira interrogans serovars reveals novel insights into physiology and pathogenesis.</title>
        <authorList>
            <person name="Nascimento A.L.T.O."/>
            <person name="Ko A.I."/>
            <person name="Martins E.A.L."/>
            <person name="Monteiro-Vitorello C.B."/>
            <person name="Ho P.L."/>
            <person name="Haake D.A."/>
            <person name="Verjovski-Almeida S."/>
            <person name="Hartskeerl R.A."/>
            <person name="Marques M.V."/>
            <person name="Oliveira M.C."/>
            <person name="Menck C.F.M."/>
            <person name="Leite L.C.C."/>
            <person name="Carrer H."/>
            <person name="Coutinho L.L."/>
            <person name="Degrave W.M."/>
            <person name="Dellagostin O.A."/>
            <person name="El-Dorry H."/>
            <person name="Ferro E.S."/>
            <person name="Ferro M.I.T."/>
            <person name="Furlan L.R."/>
            <person name="Gamberini M."/>
            <person name="Giglioti E.A."/>
            <person name="Goes-Neto A."/>
            <person name="Goldman G.H."/>
            <person name="Goldman M.H.S."/>
            <person name="Harakava R."/>
            <person name="Jeronimo S.M.B."/>
            <person name="Junqueira-de-Azevedo I.L.M."/>
            <person name="Kimura E.T."/>
            <person name="Kuramae E.E."/>
            <person name="Lemos E.G.M."/>
            <person name="Lemos M.V.F."/>
            <person name="Marino C.L."/>
            <person name="Nunes L.R."/>
            <person name="de Oliveira R.C."/>
            <person name="Pereira G.G."/>
            <person name="Reis M.S."/>
            <person name="Schriefer A."/>
            <person name="Siqueira W.J."/>
            <person name="Sommer P."/>
            <person name="Tsai S.M."/>
            <person name="Simpson A.J.G."/>
            <person name="Ferro J.A."/>
            <person name="Camargo L.E.A."/>
            <person name="Kitajima J.P."/>
            <person name="Setubal J.C."/>
            <person name="Van Sluys M.A."/>
        </authorList>
    </citation>
    <scope>NUCLEOTIDE SEQUENCE [LARGE SCALE GENOMIC DNA]</scope>
    <source>
        <strain>Fiocruz L1-130</strain>
    </source>
</reference>
<protein>
    <recommendedName>
        <fullName evidence="1">Ribose-phosphate pyrophosphokinase</fullName>
        <shortName evidence="1">RPPK</shortName>
        <ecNumber evidence="1">2.7.6.1</ecNumber>
    </recommendedName>
    <alternativeName>
        <fullName evidence="1">5-phospho-D-ribosyl alpha-1-diphosphate synthase</fullName>
    </alternativeName>
    <alternativeName>
        <fullName evidence="1">Phosphoribosyl diphosphate synthase</fullName>
    </alternativeName>
    <alternativeName>
        <fullName evidence="1">Phosphoribosyl pyrophosphate synthase</fullName>
        <shortName evidence="1">P-Rib-PP synthase</shortName>
        <shortName evidence="1">PRPP synthase</shortName>
        <shortName evidence="1">PRPPase</shortName>
    </alternativeName>
</protein>
<evidence type="ECO:0000255" key="1">
    <source>
        <dbReference type="HAMAP-Rule" id="MF_00583"/>
    </source>
</evidence>
<name>KPRS_LEPIC</name>
<comment type="function">
    <text evidence="1">Involved in the biosynthesis of the central metabolite phospho-alpha-D-ribosyl-1-pyrophosphate (PRPP) via the transfer of pyrophosphoryl group from ATP to 1-hydroxyl of ribose-5-phosphate (Rib-5-P).</text>
</comment>
<comment type="catalytic activity">
    <reaction evidence="1">
        <text>D-ribose 5-phosphate + ATP = 5-phospho-alpha-D-ribose 1-diphosphate + AMP + H(+)</text>
        <dbReference type="Rhea" id="RHEA:15609"/>
        <dbReference type="ChEBI" id="CHEBI:15378"/>
        <dbReference type="ChEBI" id="CHEBI:30616"/>
        <dbReference type="ChEBI" id="CHEBI:58017"/>
        <dbReference type="ChEBI" id="CHEBI:78346"/>
        <dbReference type="ChEBI" id="CHEBI:456215"/>
        <dbReference type="EC" id="2.7.6.1"/>
    </reaction>
</comment>
<comment type="cofactor">
    <cofactor evidence="1">
        <name>Mg(2+)</name>
        <dbReference type="ChEBI" id="CHEBI:18420"/>
    </cofactor>
    <text evidence="1">Binds 2 Mg(2+) ions per subunit.</text>
</comment>
<comment type="pathway">
    <text evidence="1">Metabolic intermediate biosynthesis; 5-phospho-alpha-D-ribose 1-diphosphate biosynthesis; 5-phospho-alpha-D-ribose 1-diphosphate from D-ribose 5-phosphate (route I): step 1/1.</text>
</comment>
<comment type="subunit">
    <text evidence="1">Homohexamer.</text>
</comment>
<comment type="subcellular location">
    <subcellularLocation>
        <location evidence="1">Cytoplasm</location>
    </subcellularLocation>
</comment>
<comment type="similarity">
    <text evidence="1">Belongs to the ribose-phosphate pyrophosphokinase family. Class I subfamily.</text>
</comment>
<organism>
    <name type="scientific">Leptospira interrogans serogroup Icterohaemorrhagiae serovar copenhageni (strain Fiocruz L1-130)</name>
    <dbReference type="NCBI Taxonomy" id="267671"/>
    <lineage>
        <taxon>Bacteria</taxon>
        <taxon>Pseudomonadati</taxon>
        <taxon>Spirochaetota</taxon>
        <taxon>Spirochaetia</taxon>
        <taxon>Leptospirales</taxon>
        <taxon>Leptospiraceae</taxon>
        <taxon>Leptospira</taxon>
    </lineage>
</organism>
<accession>Q72V73</accession>